<dbReference type="EMBL" id="BA000002">
    <property type="protein sequence ID" value="BAF34725.1"/>
    <property type="molecule type" value="Genomic_DNA"/>
</dbReference>
<dbReference type="RefSeq" id="WP_010865693.1">
    <property type="nucleotide sequence ID" value="NC_000854.2"/>
</dbReference>
<dbReference type="SMR" id="P58085"/>
<dbReference type="STRING" id="272557.APE_0362a"/>
<dbReference type="EnsemblBacteria" id="BAF34725">
    <property type="protein sequence ID" value="BAF34725"/>
    <property type="gene ID" value="APE_0362a"/>
</dbReference>
<dbReference type="GeneID" id="1445544"/>
<dbReference type="KEGG" id="ape:APE_0362a"/>
<dbReference type="eggNOG" id="arCOG00785">
    <property type="taxonomic scope" value="Archaea"/>
</dbReference>
<dbReference type="Proteomes" id="UP000002518">
    <property type="component" value="Chromosome"/>
</dbReference>
<dbReference type="GO" id="GO:0022625">
    <property type="term" value="C:cytosolic large ribosomal subunit"/>
    <property type="evidence" value="ECO:0007669"/>
    <property type="project" value="TreeGrafter"/>
</dbReference>
<dbReference type="GO" id="GO:0003735">
    <property type="term" value="F:structural constituent of ribosome"/>
    <property type="evidence" value="ECO:0007669"/>
    <property type="project" value="InterPro"/>
</dbReference>
<dbReference type="GO" id="GO:0006412">
    <property type="term" value="P:translation"/>
    <property type="evidence" value="ECO:0007669"/>
    <property type="project" value="UniProtKB-UniRule"/>
</dbReference>
<dbReference type="CDD" id="cd00427">
    <property type="entry name" value="Ribosomal_L29_HIP"/>
    <property type="match status" value="1"/>
</dbReference>
<dbReference type="FunFam" id="1.10.287.310:FF:000001">
    <property type="entry name" value="50S ribosomal protein L29"/>
    <property type="match status" value="1"/>
</dbReference>
<dbReference type="Gene3D" id="1.10.287.310">
    <property type="match status" value="1"/>
</dbReference>
<dbReference type="HAMAP" id="MF_00374">
    <property type="entry name" value="Ribosomal_uL29"/>
    <property type="match status" value="1"/>
</dbReference>
<dbReference type="InterPro" id="IPR050063">
    <property type="entry name" value="Ribosomal_protein_uL29"/>
</dbReference>
<dbReference type="InterPro" id="IPR001854">
    <property type="entry name" value="Ribosomal_uL29"/>
</dbReference>
<dbReference type="InterPro" id="IPR018254">
    <property type="entry name" value="Ribosomal_uL29_CS"/>
</dbReference>
<dbReference type="InterPro" id="IPR036049">
    <property type="entry name" value="Ribosomal_uL29_sf"/>
</dbReference>
<dbReference type="NCBIfam" id="TIGR00012">
    <property type="entry name" value="L29"/>
    <property type="match status" value="1"/>
</dbReference>
<dbReference type="PANTHER" id="PTHR10916">
    <property type="entry name" value="60S RIBOSOMAL PROTEIN L35/50S RIBOSOMAL PROTEIN L29"/>
    <property type="match status" value="1"/>
</dbReference>
<dbReference type="PANTHER" id="PTHR10916:SF0">
    <property type="entry name" value="LARGE RIBOSOMAL SUBUNIT PROTEIN UL29C"/>
    <property type="match status" value="1"/>
</dbReference>
<dbReference type="Pfam" id="PF00831">
    <property type="entry name" value="Ribosomal_L29"/>
    <property type="match status" value="1"/>
</dbReference>
<dbReference type="SUPFAM" id="SSF46561">
    <property type="entry name" value="Ribosomal protein L29 (L29p)"/>
    <property type="match status" value="1"/>
</dbReference>
<dbReference type="PROSITE" id="PS00579">
    <property type="entry name" value="RIBOSOMAL_L29"/>
    <property type="match status" value="1"/>
</dbReference>
<organism>
    <name type="scientific">Aeropyrum pernix (strain ATCC 700893 / DSM 11879 / JCM 9820 / NBRC 100138 / K1)</name>
    <dbReference type="NCBI Taxonomy" id="272557"/>
    <lineage>
        <taxon>Archaea</taxon>
        <taxon>Thermoproteota</taxon>
        <taxon>Thermoprotei</taxon>
        <taxon>Desulfurococcales</taxon>
        <taxon>Desulfurococcaceae</taxon>
        <taxon>Aeropyrum</taxon>
    </lineage>
</organism>
<gene>
    <name type="primary">rpl29</name>
    <name type="ordered locus">APE_0362a</name>
</gene>
<evidence type="ECO:0000305" key="1"/>
<protein>
    <recommendedName>
        <fullName evidence="1">Large ribosomal subunit protein uL29</fullName>
    </recommendedName>
    <alternativeName>
        <fullName>50S ribosomal protein L29</fullName>
    </alternativeName>
</protein>
<keyword id="KW-1185">Reference proteome</keyword>
<keyword id="KW-0687">Ribonucleoprotein</keyword>
<keyword id="KW-0689">Ribosomal protein</keyword>
<proteinExistence type="inferred from homology"/>
<feature type="chain" id="PRO_0000130506" description="Large ribosomal subunit protein uL29">
    <location>
        <begin position="1"/>
        <end position="71"/>
    </location>
</feature>
<sequence>MGKFKMRSKDLRGMSVEELEKTLRELRIKLMGLRYKAKVGLLENPGELREARRNVARILTVLREKREGEKA</sequence>
<name>RL29_AERPE</name>
<accession>P58085</accession>
<accession>Q05E76</accession>
<reference key="1">
    <citation type="journal article" date="1999" name="DNA Res.">
        <title>Complete genome sequence of an aerobic hyper-thermophilic crenarchaeon, Aeropyrum pernix K1.</title>
        <authorList>
            <person name="Kawarabayasi Y."/>
            <person name="Hino Y."/>
            <person name="Horikawa H."/>
            <person name="Yamazaki S."/>
            <person name="Haikawa Y."/>
            <person name="Jin-no K."/>
            <person name="Takahashi M."/>
            <person name="Sekine M."/>
            <person name="Baba S."/>
            <person name="Ankai A."/>
            <person name="Kosugi H."/>
            <person name="Hosoyama A."/>
            <person name="Fukui S."/>
            <person name="Nagai Y."/>
            <person name="Nishijima K."/>
            <person name="Nakazawa H."/>
            <person name="Takamiya M."/>
            <person name="Masuda S."/>
            <person name="Funahashi T."/>
            <person name="Tanaka T."/>
            <person name="Kudoh Y."/>
            <person name="Yamazaki J."/>
            <person name="Kushida N."/>
            <person name="Oguchi A."/>
            <person name="Aoki K."/>
            <person name="Kubota K."/>
            <person name="Nakamura Y."/>
            <person name="Nomura N."/>
            <person name="Sako Y."/>
            <person name="Kikuchi H."/>
        </authorList>
    </citation>
    <scope>NUCLEOTIDE SEQUENCE [LARGE SCALE GENOMIC DNA]</scope>
    <source>
        <strain>ATCC 700893 / DSM 11879 / JCM 9820 / NBRC 100138 / K1</strain>
    </source>
</reference>
<reference key="2">
    <citation type="unpublished observations" date="2001-05">
        <authorList>
            <person name="Medigue C."/>
            <person name="Bocs S."/>
        </authorList>
    </citation>
    <scope>IDENTIFICATION</scope>
</reference>
<comment type="similarity">
    <text evidence="1">Belongs to the universal ribosomal protein uL29 family.</text>
</comment>